<proteinExistence type="inferred from homology"/>
<name>SUI1_METBU</name>
<accession>Q12UF1</accession>
<sequence>MSSEMCPVCGLPSELCICEEVAKEQQRITVKVNRRRYGKEVTVVEGFDANEIDLHELSTYLKSKFACGGTVKGSAVELQGNHLSRMKAVLVKKGFSPEQIKD</sequence>
<reference key="1">
    <citation type="journal article" date="2009" name="ISME J.">
        <title>The genome sequence of the psychrophilic archaeon, Methanococcoides burtonii: the role of genome evolution in cold adaptation.</title>
        <authorList>
            <person name="Allen M.A."/>
            <person name="Lauro F.M."/>
            <person name="Williams T.J."/>
            <person name="Burg D."/>
            <person name="Siddiqui K.S."/>
            <person name="De Francisci D."/>
            <person name="Chong K.W."/>
            <person name="Pilak O."/>
            <person name="Chew H.H."/>
            <person name="De Maere M.Z."/>
            <person name="Ting L."/>
            <person name="Katrib M."/>
            <person name="Ng C."/>
            <person name="Sowers K.R."/>
            <person name="Galperin M.Y."/>
            <person name="Anderson I.J."/>
            <person name="Ivanova N."/>
            <person name="Dalin E."/>
            <person name="Martinez M."/>
            <person name="Lapidus A."/>
            <person name="Hauser L."/>
            <person name="Land M."/>
            <person name="Thomas T."/>
            <person name="Cavicchioli R."/>
        </authorList>
    </citation>
    <scope>NUCLEOTIDE SEQUENCE [LARGE SCALE GENOMIC DNA]</scope>
    <source>
        <strain>DSM 6242 / NBRC 107633 / OCM 468 / ACE-M</strain>
    </source>
</reference>
<evidence type="ECO:0000255" key="1">
    <source>
        <dbReference type="HAMAP-Rule" id="MF_00604"/>
    </source>
</evidence>
<gene>
    <name type="ordered locus">Mbur_2049</name>
</gene>
<organism>
    <name type="scientific">Methanococcoides burtonii (strain DSM 6242 / NBRC 107633 / OCM 468 / ACE-M)</name>
    <dbReference type="NCBI Taxonomy" id="259564"/>
    <lineage>
        <taxon>Archaea</taxon>
        <taxon>Methanobacteriati</taxon>
        <taxon>Methanobacteriota</taxon>
        <taxon>Stenosarchaea group</taxon>
        <taxon>Methanomicrobia</taxon>
        <taxon>Methanosarcinales</taxon>
        <taxon>Methanosarcinaceae</taxon>
        <taxon>Methanococcoides</taxon>
    </lineage>
</organism>
<dbReference type="EMBL" id="CP000300">
    <property type="protein sequence ID" value="ABE52925.1"/>
    <property type="molecule type" value="Genomic_DNA"/>
</dbReference>
<dbReference type="SMR" id="Q12UF1"/>
<dbReference type="STRING" id="259564.Mbur_2049"/>
<dbReference type="GeneID" id="3997431"/>
<dbReference type="KEGG" id="mbu:Mbur_2049"/>
<dbReference type="HOGENOM" id="CLU_082805_6_1_2"/>
<dbReference type="OrthoDB" id="11182at2157"/>
<dbReference type="Proteomes" id="UP000001979">
    <property type="component" value="Chromosome"/>
</dbReference>
<dbReference type="GO" id="GO:0003729">
    <property type="term" value="F:mRNA binding"/>
    <property type="evidence" value="ECO:0007669"/>
    <property type="project" value="TreeGrafter"/>
</dbReference>
<dbReference type="GO" id="GO:0003743">
    <property type="term" value="F:translation initiation factor activity"/>
    <property type="evidence" value="ECO:0007669"/>
    <property type="project" value="InterPro"/>
</dbReference>
<dbReference type="GO" id="GO:0001731">
    <property type="term" value="P:formation of translation preinitiation complex"/>
    <property type="evidence" value="ECO:0007669"/>
    <property type="project" value="TreeGrafter"/>
</dbReference>
<dbReference type="GO" id="GO:0006417">
    <property type="term" value="P:regulation of translation"/>
    <property type="evidence" value="ECO:0007669"/>
    <property type="project" value="UniProtKB-UniRule"/>
</dbReference>
<dbReference type="GO" id="GO:0002188">
    <property type="term" value="P:translation reinitiation"/>
    <property type="evidence" value="ECO:0007669"/>
    <property type="project" value="TreeGrafter"/>
</dbReference>
<dbReference type="CDD" id="cd11567">
    <property type="entry name" value="YciH_like"/>
    <property type="match status" value="1"/>
</dbReference>
<dbReference type="FunFam" id="3.30.780.10:FF:000006">
    <property type="entry name" value="Protein translation factor SUI1 homolog"/>
    <property type="match status" value="1"/>
</dbReference>
<dbReference type="Gene3D" id="3.30.780.10">
    <property type="entry name" value="SUI1-like domain"/>
    <property type="match status" value="1"/>
</dbReference>
<dbReference type="HAMAP" id="MF_00604">
    <property type="entry name" value="SUI1"/>
    <property type="match status" value="1"/>
</dbReference>
<dbReference type="InterPro" id="IPR050318">
    <property type="entry name" value="DENR/SUI1_TIF"/>
</dbReference>
<dbReference type="InterPro" id="IPR001950">
    <property type="entry name" value="SUI1"/>
</dbReference>
<dbReference type="InterPro" id="IPR022851">
    <property type="entry name" value="SUI1_arc"/>
</dbReference>
<dbReference type="InterPro" id="IPR005872">
    <property type="entry name" value="SUI1_arc_bac"/>
</dbReference>
<dbReference type="InterPro" id="IPR036877">
    <property type="entry name" value="SUI1_dom_sf"/>
</dbReference>
<dbReference type="NCBIfam" id="NF002096">
    <property type="entry name" value="PRK00939.1"/>
    <property type="match status" value="1"/>
</dbReference>
<dbReference type="NCBIfam" id="TIGR01158">
    <property type="entry name" value="SUI1_rel"/>
    <property type="match status" value="1"/>
</dbReference>
<dbReference type="PANTHER" id="PTHR12789:SF0">
    <property type="entry name" value="DENSITY-REGULATED PROTEIN"/>
    <property type="match status" value="1"/>
</dbReference>
<dbReference type="PANTHER" id="PTHR12789">
    <property type="entry name" value="DENSITY-REGULATED PROTEIN HOMOLOG"/>
    <property type="match status" value="1"/>
</dbReference>
<dbReference type="Pfam" id="PF01253">
    <property type="entry name" value="SUI1"/>
    <property type="match status" value="1"/>
</dbReference>
<dbReference type="PIRSF" id="PIRSF037511">
    <property type="entry name" value="Transl_init_SUI1_pro"/>
    <property type="match status" value="1"/>
</dbReference>
<dbReference type="SUPFAM" id="SSF55159">
    <property type="entry name" value="eIF1-like"/>
    <property type="match status" value="1"/>
</dbReference>
<dbReference type="PROSITE" id="PS50296">
    <property type="entry name" value="SUI1"/>
    <property type="match status" value="1"/>
</dbReference>
<feature type="chain" id="PRO_1000006432" description="Protein translation factor SUI1 homolog">
    <location>
        <begin position="1"/>
        <end position="102"/>
    </location>
</feature>
<comment type="similarity">
    <text evidence="1">Belongs to the SUI1 family.</text>
</comment>
<protein>
    <recommendedName>
        <fullName evidence="1">Protein translation factor SUI1 homolog</fullName>
    </recommendedName>
</protein>
<keyword id="KW-0648">Protein biosynthesis</keyword>
<keyword id="KW-0810">Translation regulation</keyword>